<name>2B_CMVFN</name>
<dbReference type="EMBL" id="D00355">
    <property type="status" value="NOT_ANNOTATED_CDS"/>
    <property type="molecule type" value="Genomic_RNA"/>
</dbReference>
<dbReference type="SMR" id="P0C783"/>
<dbReference type="IntAct" id="P0C783">
    <property type="interactions" value="1"/>
</dbReference>
<dbReference type="Proteomes" id="UP000002502">
    <property type="component" value="Genome"/>
</dbReference>
<dbReference type="GO" id="GO:0042025">
    <property type="term" value="C:host cell nucleus"/>
    <property type="evidence" value="ECO:0007669"/>
    <property type="project" value="UniProtKB-SubCell"/>
</dbReference>
<dbReference type="GO" id="GO:0052170">
    <property type="term" value="P:symbiont-mediated suppression of host innate immune response"/>
    <property type="evidence" value="ECO:0007669"/>
    <property type="project" value="UniProtKB-KW"/>
</dbReference>
<dbReference type="Gene3D" id="1.20.5.3800">
    <property type="match status" value="1"/>
</dbReference>
<dbReference type="InterPro" id="IPR004946">
    <property type="entry name" value="Cucumo_2B"/>
</dbReference>
<dbReference type="Pfam" id="PF03263">
    <property type="entry name" value="Cucumo_2B"/>
    <property type="match status" value="1"/>
</dbReference>
<organismHost>
    <name type="scientific">Cucurbita pepo</name>
    <name type="common">Vegetable marrow</name>
    <name type="synonym">Summer squash</name>
    <dbReference type="NCBI Taxonomy" id="3663"/>
</organismHost>
<organismHost>
    <name type="scientific">Nicotiana tabacum</name>
    <name type="common">Common tobacco</name>
    <dbReference type="NCBI Taxonomy" id="4097"/>
</organismHost>
<evidence type="ECO:0000250" key="1">
    <source>
        <dbReference type="UniProtKB" id="Q66125"/>
    </source>
</evidence>
<evidence type="ECO:0000256" key="2">
    <source>
        <dbReference type="SAM" id="MobiDB-lite"/>
    </source>
</evidence>
<evidence type="ECO:0000269" key="3">
    <source>
    </source>
</evidence>
<evidence type="ECO:0000269" key="4">
    <source>
    </source>
</evidence>
<evidence type="ECO:0000305" key="5"/>
<evidence type="ECO:0000305" key="6">
    <source>
    </source>
</evidence>
<accession>P0C783</accession>
<sequence>MELNVGAMTNVELQLARMVEAKKQRRRSHKQNRRERGHKSPSERARSNLRLFRFLPFYQVDGSELTGSCRHVNVAELPESEASRLELSAEDHDFDDTDWFAGNEWAEGAF</sequence>
<keyword id="KW-1048">Host nucleus</keyword>
<keyword id="KW-0945">Host-virus interaction</keyword>
<keyword id="KW-1090">Inhibition of host innate immune response by virus</keyword>
<keyword id="KW-1185">Reference proteome</keyword>
<keyword id="KW-0941">Suppressor of RNA silencing</keyword>
<keyword id="KW-0899">Viral immunoevasion</keyword>
<gene>
    <name type="ORF">ORF2b</name>
</gene>
<comment type="function">
    <text evidence="1 4">Multifunctional protein that plays two independent roles: viral suppressor of host RNAi (VSR) and viral inducer of host attractiveness to insect vectors (VIA). Acts as a suppressor of RNA-mediated gene silencing, also known as post-transcriptional gene silencing (PTGS), a mechanism of plant viral defense that limits the accumulation of viral RNAs (PubMed:25380036). May directly interfere with mobile silencing signaling (By similarity). Also inhibits signal transduction by the phytohormone jasmonate, making the infected plant more attractive to aphids, which are the second host to play a role as a dissemination vector. Acts by binding to and inhibiting JAZ degradation in the host (By similarity).</text>
</comment>
<comment type="subunit">
    <text evidence="1 3 6">Homotetramer (Probable). Interacts with host AGO1; this interaction blocks AGO1 cleavage activity to attenuate RNA silencing and thus counter host defense (PubMed:17158744). Interacts with host JAZ (By similarity).</text>
</comment>
<comment type="subcellular location">
    <subcellularLocation>
        <location evidence="1">Host nucleus</location>
    </subcellularLocation>
</comment>
<comment type="similarity">
    <text evidence="5">Belongs to the cucumovirus/ilarvirus protein 2b family.</text>
</comment>
<proteinExistence type="evidence at protein level"/>
<protein>
    <recommendedName>
        <fullName>Suppressor of silencing 2b</fullName>
    </recommendedName>
    <alternativeName>
        <fullName>Protein 2b</fullName>
    </alternativeName>
</protein>
<feature type="chain" id="PRO_0000399910" description="Suppressor of silencing 2b">
    <location>
        <begin position="1"/>
        <end position="110"/>
    </location>
</feature>
<feature type="region of interest" description="Disordered" evidence="2">
    <location>
        <begin position="16"/>
        <end position="45"/>
    </location>
</feature>
<feature type="short sequence motif" description="Nuclear localization signal" evidence="1">
    <location>
        <begin position="22"/>
        <end position="27"/>
    </location>
</feature>
<feature type="compositionally biased region" description="Basic residues" evidence="2">
    <location>
        <begin position="23"/>
        <end position="37"/>
    </location>
</feature>
<feature type="mutagenesis site" description="Loss of cell-to-cell movement." evidence="4">
    <original>MEL</original>
    <variation>AAA</variation>
    <location>
        <begin position="1"/>
        <end position="3"/>
    </location>
</feature>
<feature type="mutagenesis site" description="Loss of gene silencing suppressor function." evidence="4">
    <original>NVE</original>
    <variation>AAA</variation>
    <location>
        <begin position="10"/>
        <end position="12"/>
    </location>
</feature>
<feature type="mutagenesis site" description="Loss of gene silencing suppressor function." evidence="4">
    <original>KKQ</original>
    <variation>AAA</variation>
    <location>
        <begin position="22"/>
        <end position="24"/>
    </location>
</feature>
<feature type="mutagenesis site" description="Loss of gene silencing suppressor function." evidence="4">
    <original>QNR</original>
    <variation>AAA</variation>
    <location>
        <begin position="31"/>
        <end position="33"/>
    </location>
</feature>
<feature type="mutagenesis site" description="Loss of gene silencing suppressor function." evidence="4">
    <original>RER</original>
    <variation>AAA</variation>
    <location>
        <begin position="34"/>
        <end position="36"/>
    </location>
</feature>
<feature type="mutagenesis site" description="Loss of gene silencing suppressor function." evidence="4">
    <original>SPS</original>
    <variation>AAA</variation>
    <location>
        <begin position="40"/>
        <end position="42"/>
    </location>
</feature>
<feature type="mutagenesis site" description="Loss of gene silencing suppressor function." evidence="4">
    <original>LPF</original>
    <variation>AAA</variation>
    <location>
        <begin position="55"/>
        <end position="57"/>
    </location>
</feature>
<feature type="mutagenesis site" description="Loss of cell-to-cell movement." evidence="4">
    <original>RHV</original>
    <variation>AAA</variation>
    <location>
        <begin position="70"/>
        <end position="72"/>
    </location>
</feature>
<reference key="1">
    <citation type="journal article" date="1988" name="J. Gen. Virol.">
        <title>Nucleotide sequence and evolutionary relationships of cucumber mosaic virus (CMV) strains: CMV RNA 2.</title>
        <authorList>
            <person name="Rizzo T.M."/>
            <person name="Palukaitis P."/>
        </authorList>
    </citation>
    <scope>NUCLEOTIDE SEQUENCE [GENOMIC RNA]</scope>
</reference>
<reference key="2">
    <citation type="journal article" date="2006" name="Genes Dev.">
        <title>Cucumber mosaic virus-encoded 2b suppressor inhibits Arabidopsis Argonaute1 cleavage activity to counter plant defense.</title>
        <authorList>
            <person name="Zhang X."/>
            <person name="Yuan Y.R."/>
            <person name="Pei Y."/>
            <person name="Lin S.S."/>
            <person name="Tuschl T."/>
            <person name="Patel D.J."/>
            <person name="Chua N.H."/>
        </authorList>
    </citation>
    <scope>FUNCTION</scope>
    <scope>INTERACTION WITH ARABIDOPSIS ARGONAUTE1/AGO1</scope>
</reference>
<reference key="3">
    <citation type="journal article" date="2014" name="PLoS ONE">
        <title>Alanine scanning of cucumber mosaic virus (CMV) 2b protein identifies different positions for cell-to-cell movement and gene silencing suppressor activity.</title>
        <authorList>
            <person name="Nemes K."/>
            <person name="Gellert A."/>
            <person name="Balazs E."/>
            <person name="Salanki K."/>
        </authorList>
    </citation>
    <scope>FUNCTION</scope>
    <scope>MUTAGENESIS OF 1-MET--LEU-3; 22-LYS--GLN-24; 10-ASN--GLU-12; 31-GLN--ARG-33; 34-ARG--ARG-36; 40-SER--SER-42; 55-LEU--PHE-57 AND 70-ARG--VAL-72</scope>
</reference>
<organism>
    <name type="scientific">Cucumber mosaic virus (strain FNY)</name>
    <name type="common">CMV</name>
    <dbReference type="NCBI Taxonomy" id="12307"/>
    <lineage>
        <taxon>Viruses</taxon>
        <taxon>Riboviria</taxon>
        <taxon>Orthornavirae</taxon>
        <taxon>Kitrinoviricota</taxon>
        <taxon>Alsuviricetes</taxon>
        <taxon>Martellivirales</taxon>
        <taxon>Bromoviridae</taxon>
        <taxon>Cucumovirus</taxon>
        <taxon>Cucumber mosaic virus</taxon>
    </lineage>
</organism>